<protein>
    <recommendedName>
        <fullName evidence="1">Argininosuccinate synthase</fullName>
        <ecNumber evidence="1">6.3.4.5</ecNumber>
    </recommendedName>
    <alternativeName>
        <fullName evidence="1">Citrulline--aspartate ligase</fullName>
    </alternativeName>
</protein>
<reference key="1">
    <citation type="journal article" date="2004" name="J. Bacteriol.">
        <title>Complete genome sequence of the genetically tractable hydrogenotrophic methanogen Methanococcus maripaludis.</title>
        <authorList>
            <person name="Hendrickson E.L."/>
            <person name="Kaul R."/>
            <person name="Zhou Y."/>
            <person name="Bovee D."/>
            <person name="Chapman P."/>
            <person name="Chung J."/>
            <person name="Conway de Macario E."/>
            <person name="Dodsworth J.A."/>
            <person name="Gillett W."/>
            <person name="Graham D.E."/>
            <person name="Hackett M."/>
            <person name="Haydock A.K."/>
            <person name="Kang A."/>
            <person name="Land M.L."/>
            <person name="Levy R."/>
            <person name="Lie T.J."/>
            <person name="Major T.A."/>
            <person name="Moore B.C."/>
            <person name="Porat I."/>
            <person name="Palmeiri A."/>
            <person name="Rouse G."/>
            <person name="Saenphimmachak C."/>
            <person name="Soell D."/>
            <person name="Van Dien S."/>
            <person name="Wang T."/>
            <person name="Whitman W.B."/>
            <person name="Xia Q."/>
            <person name="Zhang Y."/>
            <person name="Larimer F.W."/>
            <person name="Olson M.V."/>
            <person name="Leigh J.A."/>
        </authorList>
    </citation>
    <scope>NUCLEOTIDE SEQUENCE [LARGE SCALE GENOMIC DNA]</scope>
    <source>
        <strain>DSM 14266 / JCM 13030 / NBRC 101832 / S2 / LL</strain>
    </source>
</reference>
<comment type="catalytic activity">
    <reaction evidence="1">
        <text>L-citrulline + L-aspartate + ATP = 2-(N(omega)-L-arginino)succinate + AMP + diphosphate + H(+)</text>
        <dbReference type="Rhea" id="RHEA:10932"/>
        <dbReference type="ChEBI" id="CHEBI:15378"/>
        <dbReference type="ChEBI" id="CHEBI:29991"/>
        <dbReference type="ChEBI" id="CHEBI:30616"/>
        <dbReference type="ChEBI" id="CHEBI:33019"/>
        <dbReference type="ChEBI" id="CHEBI:57472"/>
        <dbReference type="ChEBI" id="CHEBI:57743"/>
        <dbReference type="ChEBI" id="CHEBI:456215"/>
        <dbReference type="EC" id="6.3.4.5"/>
    </reaction>
</comment>
<comment type="pathway">
    <text evidence="1">Amino-acid biosynthesis; L-arginine biosynthesis; L-arginine from L-ornithine and carbamoyl phosphate: step 2/3.</text>
</comment>
<comment type="subunit">
    <text evidence="1">Homotetramer.</text>
</comment>
<comment type="subcellular location">
    <subcellularLocation>
        <location evidence="1">Cytoplasm</location>
    </subcellularLocation>
</comment>
<comment type="similarity">
    <text evidence="1">Belongs to the argininosuccinate synthase family. Type 1 subfamily.</text>
</comment>
<gene>
    <name evidence="1" type="primary">argG</name>
    <name type="ordered locus">MMP0073</name>
</gene>
<accession>P61527</accession>
<evidence type="ECO:0000255" key="1">
    <source>
        <dbReference type="HAMAP-Rule" id="MF_00005"/>
    </source>
</evidence>
<feature type="chain" id="PRO_0000148679" description="Argininosuccinate synthase">
    <location>
        <begin position="1"/>
        <end position="397"/>
    </location>
</feature>
<feature type="binding site" evidence="1">
    <location>
        <begin position="9"/>
        <end position="17"/>
    </location>
    <ligand>
        <name>ATP</name>
        <dbReference type="ChEBI" id="CHEBI:30616"/>
    </ligand>
</feature>
<feature type="binding site" evidence="1">
    <location>
        <position position="87"/>
    </location>
    <ligand>
        <name>L-citrulline</name>
        <dbReference type="ChEBI" id="CHEBI:57743"/>
    </ligand>
</feature>
<feature type="binding site" evidence="1">
    <location>
        <position position="117"/>
    </location>
    <ligand>
        <name>ATP</name>
        <dbReference type="ChEBI" id="CHEBI:30616"/>
    </ligand>
</feature>
<feature type="binding site" evidence="1">
    <location>
        <position position="119"/>
    </location>
    <ligand>
        <name>L-aspartate</name>
        <dbReference type="ChEBI" id="CHEBI:29991"/>
    </ligand>
</feature>
<feature type="binding site" evidence="1">
    <location>
        <position position="123"/>
    </location>
    <ligand>
        <name>L-aspartate</name>
        <dbReference type="ChEBI" id="CHEBI:29991"/>
    </ligand>
</feature>
<feature type="binding site" evidence="1">
    <location>
        <position position="123"/>
    </location>
    <ligand>
        <name>L-citrulline</name>
        <dbReference type="ChEBI" id="CHEBI:57743"/>
    </ligand>
</feature>
<feature type="binding site" evidence="1">
    <location>
        <position position="124"/>
    </location>
    <ligand>
        <name>L-aspartate</name>
        <dbReference type="ChEBI" id="CHEBI:29991"/>
    </ligand>
</feature>
<feature type="binding site" evidence="1">
    <location>
        <position position="127"/>
    </location>
    <ligand>
        <name>L-citrulline</name>
        <dbReference type="ChEBI" id="CHEBI:57743"/>
    </ligand>
</feature>
<feature type="binding site" evidence="1">
    <location>
        <position position="175"/>
    </location>
    <ligand>
        <name>L-citrulline</name>
        <dbReference type="ChEBI" id="CHEBI:57743"/>
    </ligand>
</feature>
<feature type="binding site" evidence="1">
    <location>
        <position position="184"/>
    </location>
    <ligand>
        <name>L-citrulline</name>
        <dbReference type="ChEBI" id="CHEBI:57743"/>
    </ligand>
</feature>
<feature type="binding site" evidence="1">
    <location>
        <position position="260"/>
    </location>
    <ligand>
        <name>L-citrulline</name>
        <dbReference type="ChEBI" id="CHEBI:57743"/>
    </ligand>
</feature>
<feature type="binding site" evidence="1">
    <location>
        <position position="272"/>
    </location>
    <ligand>
        <name>L-citrulline</name>
        <dbReference type="ChEBI" id="CHEBI:57743"/>
    </ligand>
</feature>
<sequence length="397" mass="44580">MQEKIAVLAYSGGLDTSCCLKLLEDKYDYKVISVAVDVGQPEDDLKEPEEKAKKFGVLKHYTIDAKEEFAKDYIFRAIKANALYEGYPLSTALARPLIAIKIAELAQEVGASAISHGCTGKGNDQFRFESVMRAKTPEIEIVAPIRDLNLTRTEEIAYAKEKGIPVPVDLEKPFSIDENLWGRSIEGGILEDPMTETPKECFAWTVDPTDAQDKEEYVEIDFEEGVPVAINGDALEAVSLIRKVNEIAGRNGVGRVDIVEDRVLGLKSRENYECPGAMLLITAHKALEQLVLTREELVFKEMVDSKYADLVYKGLWHEPLRLDLDAFIDKTQTRMNGKVVLKLYKGSMRIAGRESKDAIYNEEMVSFENKEMDQREIVGMVKFHGLQAAIYEGLTRK</sequence>
<name>ASSY_METMP</name>
<proteinExistence type="inferred from homology"/>
<keyword id="KW-0028">Amino-acid biosynthesis</keyword>
<keyword id="KW-0055">Arginine biosynthesis</keyword>
<keyword id="KW-0067">ATP-binding</keyword>
<keyword id="KW-0963">Cytoplasm</keyword>
<keyword id="KW-0436">Ligase</keyword>
<keyword id="KW-0547">Nucleotide-binding</keyword>
<keyword id="KW-1185">Reference proteome</keyword>
<dbReference type="EC" id="6.3.4.5" evidence="1"/>
<dbReference type="EMBL" id="BX950229">
    <property type="protein sequence ID" value="CAF29629.1"/>
    <property type="molecule type" value="Genomic_DNA"/>
</dbReference>
<dbReference type="RefSeq" id="WP_011170017.1">
    <property type="nucleotide sequence ID" value="NC_005791.1"/>
</dbReference>
<dbReference type="SMR" id="P61527"/>
<dbReference type="STRING" id="267377.MMP0073"/>
<dbReference type="EnsemblBacteria" id="CAF29629">
    <property type="protein sequence ID" value="CAF29629"/>
    <property type="gene ID" value="MMP0073"/>
</dbReference>
<dbReference type="GeneID" id="2761944"/>
<dbReference type="KEGG" id="mmp:MMP0073"/>
<dbReference type="PATRIC" id="fig|267377.15.peg.74"/>
<dbReference type="eggNOG" id="arCOG00112">
    <property type="taxonomic scope" value="Archaea"/>
</dbReference>
<dbReference type="HOGENOM" id="CLU_032784_4_2_2"/>
<dbReference type="OrthoDB" id="5877at2157"/>
<dbReference type="UniPathway" id="UPA00068">
    <property type="reaction ID" value="UER00113"/>
</dbReference>
<dbReference type="Proteomes" id="UP000000590">
    <property type="component" value="Chromosome"/>
</dbReference>
<dbReference type="GO" id="GO:0005737">
    <property type="term" value="C:cytoplasm"/>
    <property type="evidence" value="ECO:0007669"/>
    <property type="project" value="UniProtKB-SubCell"/>
</dbReference>
<dbReference type="GO" id="GO:0004055">
    <property type="term" value="F:argininosuccinate synthase activity"/>
    <property type="evidence" value="ECO:0007669"/>
    <property type="project" value="UniProtKB-UniRule"/>
</dbReference>
<dbReference type="GO" id="GO:0005524">
    <property type="term" value="F:ATP binding"/>
    <property type="evidence" value="ECO:0007669"/>
    <property type="project" value="UniProtKB-UniRule"/>
</dbReference>
<dbReference type="GO" id="GO:0000053">
    <property type="term" value="P:argininosuccinate metabolic process"/>
    <property type="evidence" value="ECO:0007669"/>
    <property type="project" value="TreeGrafter"/>
</dbReference>
<dbReference type="GO" id="GO:0006526">
    <property type="term" value="P:L-arginine biosynthetic process"/>
    <property type="evidence" value="ECO:0007669"/>
    <property type="project" value="UniProtKB-UniRule"/>
</dbReference>
<dbReference type="GO" id="GO:0000050">
    <property type="term" value="P:urea cycle"/>
    <property type="evidence" value="ECO:0007669"/>
    <property type="project" value="TreeGrafter"/>
</dbReference>
<dbReference type="CDD" id="cd01999">
    <property type="entry name" value="ASS"/>
    <property type="match status" value="1"/>
</dbReference>
<dbReference type="FunFam" id="3.40.50.620:FF:000019">
    <property type="entry name" value="Argininosuccinate synthase"/>
    <property type="match status" value="1"/>
</dbReference>
<dbReference type="FunFam" id="3.90.1260.10:FF:000007">
    <property type="entry name" value="Argininosuccinate synthase"/>
    <property type="match status" value="1"/>
</dbReference>
<dbReference type="Gene3D" id="3.90.1260.10">
    <property type="entry name" value="Argininosuccinate synthetase, chain A, domain 2"/>
    <property type="match status" value="1"/>
</dbReference>
<dbReference type="Gene3D" id="3.40.50.620">
    <property type="entry name" value="HUPs"/>
    <property type="match status" value="1"/>
</dbReference>
<dbReference type="HAMAP" id="MF_00005">
    <property type="entry name" value="Arg_succ_synth_type1"/>
    <property type="match status" value="1"/>
</dbReference>
<dbReference type="InterPro" id="IPR048268">
    <property type="entry name" value="Arginosuc_syn_C"/>
</dbReference>
<dbReference type="InterPro" id="IPR048267">
    <property type="entry name" value="Arginosuc_syn_N"/>
</dbReference>
<dbReference type="InterPro" id="IPR001518">
    <property type="entry name" value="Arginosuc_synth"/>
</dbReference>
<dbReference type="InterPro" id="IPR018223">
    <property type="entry name" value="Arginosuc_synth_CS"/>
</dbReference>
<dbReference type="InterPro" id="IPR023434">
    <property type="entry name" value="Arginosuc_synth_type_1_subfam"/>
</dbReference>
<dbReference type="InterPro" id="IPR024074">
    <property type="entry name" value="AS_cat/multimer_dom_body"/>
</dbReference>
<dbReference type="InterPro" id="IPR014729">
    <property type="entry name" value="Rossmann-like_a/b/a_fold"/>
</dbReference>
<dbReference type="NCBIfam" id="TIGR00032">
    <property type="entry name" value="argG"/>
    <property type="match status" value="1"/>
</dbReference>
<dbReference type="NCBIfam" id="NF001770">
    <property type="entry name" value="PRK00509.1"/>
    <property type="match status" value="1"/>
</dbReference>
<dbReference type="NCBIfam" id="NF010392">
    <property type="entry name" value="PRK13820.1"/>
    <property type="match status" value="1"/>
</dbReference>
<dbReference type="PANTHER" id="PTHR11587">
    <property type="entry name" value="ARGININOSUCCINATE SYNTHASE"/>
    <property type="match status" value="1"/>
</dbReference>
<dbReference type="PANTHER" id="PTHR11587:SF2">
    <property type="entry name" value="ARGININOSUCCINATE SYNTHASE"/>
    <property type="match status" value="1"/>
</dbReference>
<dbReference type="Pfam" id="PF20979">
    <property type="entry name" value="Arginosuc_syn_C"/>
    <property type="match status" value="1"/>
</dbReference>
<dbReference type="Pfam" id="PF00764">
    <property type="entry name" value="Arginosuc_synth"/>
    <property type="match status" value="1"/>
</dbReference>
<dbReference type="SUPFAM" id="SSF52402">
    <property type="entry name" value="Adenine nucleotide alpha hydrolases-like"/>
    <property type="match status" value="1"/>
</dbReference>
<dbReference type="SUPFAM" id="SSF69864">
    <property type="entry name" value="Argininosuccinate synthetase, C-terminal domain"/>
    <property type="match status" value="1"/>
</dbReference>
<dbReference type="PROSITE" id="PS00564">
    <property type="entry name" value="ARGININOSUCCIN_SYN_1"/>
    <property type="match status" value="1"/>
</dbReference>
<dbReference type="PROSITE" id="PS00565">
    <property type="entry name" value="ARGININOSUCCIN_SYN_2"/>
    <property type="match status" value="1"/>
</dbReference>
<organism>
    <name type="scientific">Methanococcus maripaludis (strain DSM 14266 / JCM 13030 / NBRC 101832 / S2 / LL)</name>
    <dbReference type="NCBI Taxonomy" id="267377"/>
    <lineage>
        <taxon>Archaea</taxon>
        <taxon>Methanobacteriati</taxon>
        <taxon>Methanobacteriota</taxon>
        <taxon>Methanomada group</taxon>
        <taxon>Methanococci</taxon>
        <taxon>Methanococcales</taxon>
        <taxon>Methanococcaceae</taxon>
        <taxon>Methanococcus</taxon>
    </lineage>
</organism>